<keyword id="KW-0025">Alternative splicing</keyword>
<keyword id="KW-0028">Amino-acid biosynthesis</keyword>
<keyword id="KW-0061">Asparagine biosynthesis</keyword>
<keyword id="KW-0315">Glutamine amidotransferase</keyword>
<keyword id="KW-1185">Reference proteome</keyword>
<evidence type="ECO:0000250" key="1"/>
<evidence type="ECO:0000255" key="2">
    <source>
        <dbReference type="PROSITE-ProRule" id="PRU00609"/>
    </source>
</evidence>
<evidence type="ECO:0000256" key="3">
    <source>
        <dbReference type="SAM" id="MobiDB-lite"/>
    </source>
</evidence>
<evidence type="ECO:0000303" key="4">
    <source>
    </source>
</evidence>
<evidence type="ECO:0000305" key="5"/>
<gene>
    <name type="primary">Asnsd1</name>
</gene>
<comment type="alternative products">
    <event type="alternative splicing"/>
    <isoform>
        <id>Q8BFS9-1</id>
        <name>1</name>
        <sequence type="displayed"/>
    </isoform>
    <isoform>
        <id>Q8BFS9-2</id>
        <name>2</name>
        <sequence type="described" ref="VSP_032353"/>
    </isoform>
</comment>
<comment type="sequence caution" evidence="5">
    <conflict type="frameshift">
        <sequence resource="EMBL-CDS" id="BAC28818"/>
    </conflict>
</comment>
<comment type="sequence caution" evidence="5">
    <conflict type="frameshift">
        <sequence resource="EMBL-CDS" id="BAE33002"/>
    </conflict>
</comment>
<dbReference type="EMBL" id="AK031295">
    <property type="protein sequence ID" value="BAC27337.1"/>
    <property type="molecule type" value="mRNA"/>
</dbReference>
<dbReference type="EMBL" id="AK034746">
    <property type="protein sequence ID" value="BAC28818.1"/>
    <property type="status" value="ALT_FRAME"/>
    <property type="molecule type" value="mRNA"/>
</dbReference>
<dbReference type="EMBL" id="AK049194">
    <property type="protein sequence ID" value="BAC33602.1"/>
    <property type="molecule type" value="mRNA"/>
</dbReference>
<dbReference type="EMBL" id="AK076793">
    <property type="protein sequence ID" value="BAC36483.1"/>
    <property type="molecule type" value="mRNA"/>
</dbReference>
<dbReference type="EMBL" id="AK154984">
    <property type="protein sequence ID" value="BAE32973.1"/>
    <property type="molecule type" value="mRNA"/>
</dbReference>
<dbReference type="EMBL" id="AK155030">
    <property type="protein sequence ID" value="BAE33002.1"/>
    <property type="status" value="ALT_FRAME"/>
    <property type="molecule type" value="mRNA"/>
</dbReference>
<dbReference type="EMBL" id="AK168103">
    <property type="protein sequence ID" value="BAE40074.1"/>
    <property type="molecule type" value="mRNA"/>
</dbReference>
<dbReference type="EMBL" id="AK170510">
    <property type="protein sequence ID" value="BAE41847.1"/>
    <property type="molecule type" value="mRNA"/>
</dbReference>
<dbReference type="EMBL" id="BC013617">
    <property type="protein sequence ID" value="AAH13617.1"/>
    <property type="molecule type" value="mRNA"/>
</dbReference>
<dbReference type="CCDS" id="CCDS14954.1">
    <molecule id="Q8BFS9-1"/>
</dbReference>
<dbReference type="RefSeq" id="NP_598489.2">
    <molecule id="Q8BFS9-1"/>
    <property type="nucleotide sequence ID" value="NM_133728.3"/>
</dbReference>
<dbReference type="SMR" id="Q8BFS9"/>
<dbReference type="FunCoup" id="Q8BFS9">
    <property type="interactions" value="154"/>
</dbReference>
<dbReference type="STRING" id="10090.ENSMUSP00000027264"/>
<dbReference type="iPTMnet" id="Q8BFS9"/>
<dbReference type="PhosphoSitePlus" id="Q8BFS9"/>
<dbReference type="PaxDb" id="10090-ENSMUSP00000027264"/>
<dbReference type="PeptideAtlas" id="Q8BFS9"/>
<dbReference type="ProteomicsDB" id="265118">
    <molecule id="Q8BFS9-1"/>
</dbReference>
<dbReference type="ProteomicsDB" id="265119">
    <molecule id="Q8BFS9-2"/>
</dbReference>
<dbReference type="Pumba" id="Q8BFS9"/>
<dbReference type="DNASU" id="70396"/>
<dbReference type="Ensembl" id="ENSMUST00000027264.10">
    <molecule id="Q8BFS9-1"/>
    <property type="protein sequence ID" value="ENSMUSP00000027264.4"/>
    <property type="gene ID" value="ENSMUSG00000026095.16"/>
</dbReference>
<dbReference type="Ensembl" id="ENSMUST00000144660.3">
    <molecule id="Q8BFS9-2"/>
    <property type="protein sequence ID" value="ENSMUSP00000139404.2"/>
    <property type="gene ID" value="ENSMUSG00000099913.2"/>
</dbReference>
<dbReference type="GeneID" id="70396"/>
<dbReference type="KEGG" id="mmu:70396"/>
<dbReference type="UCSC" id="uc007azg.2">
    <molecule id="Q8BFS9-1"/>
    <property type="organism name" value="mouse"/>
</dbReference>
<dbReference type="AGR" id="MGI:1917646"/>
<dbReference type="CTD" id="54529"/>
<dbReference type="MGI" id="MGI:1917646">
    <property type="gene designation" value="Asnsd1"/>
</dbReference>
<dbReference type="VEuPathDB" id="HostDB:ENSMUSG00000026095"/>
<dbReference type="VEuPathDB" id="HostDB:ENSMUSG00000099913"/>
<dbReference type="eggNOG" id="KOG0573">
    <property type="taxonomic scope" value="Eukaryota"/>
</dbReference>
<dbReference type="GeneTree" id="ENSGT00390000012446"/>
<dbReference type="HOGENOM" id="CLU_012368_2_0_1"/>
<dbReference type="InParanoid" id="Q8BFS9"/>
<dbReference type="OMA" id="HAKICIL"/>
<dbReference type="OrthoDB" id="10252281at2759"/>
<dbReference type="PhylomeDB" id="Q8BFS9"/>
<dbReference type="TreeFam" id="TF314578"/>
<dbReference type="BioGRID-ORCS" id="70396">
    <property type="hits" value="4 hits in 79 CRISPR screens"/>
</dbReference>
<dbReference type="PRO" id="PR:Q8BFS9"/>
<dbReference type="Proteomes" id="UP000000589">
    <property type="component" value="Chromosome 1"/>
</dbReference>
<dbReference type="RNAct" id="Q8BFS9">
    <property type="molecule type" value="protein"/>
</dbReference>
<dbReference type="Bgee" id="ENSMUSG00000026095">
    <property type="expression patterns" value="Expressed in spermatocyte and 75 other cell types or tissues"/>
</dbReference>
<dbReference type="ExpressionAtlas" id="Q8BFS9">
    <property type="expression patterns" value="baseline and differential"/>
</dbReference>
<dbReference type="GO" id="GO:0004066">
    <property type="term" value="F:asparagine synthase (glutamine-hydrolyzing) activity"/>
    <property type="evidence" value="ECO:0007669"/>
    <property type="project" value="InterPro"/>
</dbReference>
<dbReference type="GO" id="GO:0060612">
    <property type="term" value="P:adipose tissue development"/>
    <property type="evidence" value="ECO:0000315"/>
    <property type="project" value="MGI"/>
</dbReference>
<dbReference type="GO" id="GO:0006529">
    <property type="term" value="P:asparagine biosynthetic process"/>
    <property type="evidence" value="ECO:0007669"/>
    <property type="project" value="UniProtKB-KW"/>
</dbReference>
<dbReference type="GO" id="GO:0007517">
    <property type="term" value="P:muscle organ development"/>
    <property type="evidence" value="ECO:0000315"/>
    <property type="project" value="MGI"/>
</dbReference>
<dbReference type="GO" id="GO:0060538">
    <property type="term" value="P:skeletal muscle organ development"/>
    <property type="evidence" value="ECO:0000315"/>
    <property type="project" value="MGI"/>
</dbReference>
<dbReference type="GO" id="GO:0007519">
    <property type="term" value="P:skeletal muscle tissue development"/>
    <property type="evidence" value="ECO:0000315"/>
    <property type="project" value="MGI"/>
</dbReference>
<dbReference type="GO" id="GO:0060290">
    <property type="term" value="P:transdifferentiation"/>
    <property type="evidence" value="ECO:0000315"/>
    <property type="project" value="MGI"/>
</dbReference>
<dbReference type="CDD" id="cd01991">
    <property type="entry name" value="Asn_synthase_B_C"/>
    <property type="match status" value="1"/>
</dbReference>
<dbReference type="CDD" id="cd03766">
    <property type="entry name" value="Gn_AT_II_novel"/>
    <property type="match status" value="1"/>
</dbReference>
<dbReference type="Gene3D" id="3.60.20.10">
    <property type="entry name" value="Glutamine Phosphoribosylpyrophosphate, subunit 1, domain 1"/>
    <property type="match status" value="1"/>
</dbReference>
<dbReference type="Gene3D" id="3.40.50.620">
    <property type="entry name" value="HUPs"/>
    <property type="match status" value="1"/>
</dbReference>
<dbReference type="InterPro" id="IPR001962">
    <property type="entry name" value="Asn_synthase"/>
</dbReference>
<dbReference type="InterPro" id="IPR051857">
    <property type="entry name" value="Asn_synthetase_domain"/>
</dbReference>
<dbReference type="InterPro" id="IPR017932">
    <property type="entry name" value="GATase_2_dom"/>
</dbReference>
<dbReference type="InterPro" id="IPR029055">
    <property type="entry name" value="Ntn_hydrolases_N"/>
</dbReference>
<dbReference type="InterPro" id="IPR014729">
    <property type="entry name" value="Rossmann-like_a/b/a_fold"/>
</dbReference>
<dbReference type="PANTHER" id="PTHR45937">
    <property type="entry name" value="ASPARAGINE SYNTHETASE DOMAIN-CONTAINING PROTEIN 1"/>
    <property type="match status" value="1"/>
</dbReference>
<dbReference type="PANTHER" id="PTHR45937:SF1">
    <property type="entry name" value="ASPARAGINE SYNTHETASE DOMAIN-CONTAINING PROTEIN 1"/>
    <property type="match status" value="1"/>
</dbReference>
<dbReference type="Pfam" id="PF00733">
    <property type="entry name" value="Asn_synthase"/>
    <property type="match status" value="1"/>
</dbReference>
<dbReference type="Pfam" id="PF13537">
    <property type="entry name" value="GATase_7"/>
    <property type="match status" value="1"/>
</dbReference>
<dbReference type="SUPFAM" id="SSF52402">
    <property type="entry name" value="Adenine nucleotide alpha hydrolases-like"/>
    <property type="match status" value="1"/>
</dbReference>
<dbReference type="SUPFAM" id="SSF56235">
    <property type="entry name" value="N-terminal nucleophile aminohydrolases (Ntn hydrolases)"/>
    <property type="match status" value="1"/>
</dbReference>
<dbReference type="PROSITE" id="PS51278">
    <property type="entry name" value="GATASE_TYPE_2"/>
    <property type="match status" value="1"/>
</dbReference>
<sequence length="627" mass="69753">MCGICCSVSFSIEHFSKELKEDLLHNLRRRGPNSSRQLLKSAVNYQCLFSGHVLHLRGVLTIQPVEDEHGNVFLWNGEVFNGVKVEAEDNDTQVMFNSLSACKNESEILLLFSKVQGPWSFIYYQASSHHLWFGRDFFGRRSLLWQFSNLGKSFCLSSVGTQVYGVADQWQEVPASGIFQIDLNSAAVSRSVILKLYPWRYISKEDIAEECGNDLTQTPAGLPEFVSVVINEANLYLSKPVVPLNKKLPESPLEIQCRNSSSTSGTRETLEVFLTDEHTKKIVQQFIAILNVSVKRRILCLAREENLASKEVLKTCSSKANIAILFSGGVDSMVIAALADRHIPLDEPIDLLNVAFVPKQKTGLPIPNIERKQQNHHEIPSEESSQSPAADEGPGEAEVPDRVTGKAGLKELQSVNPSRTWNFVEINVSLEELQKLRRARICHLVQPLDTVLDDSIGCAVWFASRGIGWLVTQDAVRSYKSSAKVILTGIGADEQLAGYSRHRARFQSLGLEGLNEEIAMELGRISSRNLGRDDRVIGDHGKEARFPFLDENVVSFLNSLPVWEKVDLTLPRGVGEKLILRLAAMELGLPASALLPKRAIQFGSRIAKLEKSNEKASDKCGRLQILP</sequence>
<feature type="initiator methionine" description="Removed" evidence="1">
    <location>
        <position position="1"/>
    </location>
</feature>
<feature type="chain" id="PRO_0000324762" description="Asparagine synthetase domain-containing protein 1">
    <location>
        <begin position="2"/>
        <end position="627"/>
    </location>
</feature>
<feature type="domain" description="Glutamine amidotransferase type-2" evidence="2">
    <location>
        <begin position="2"/>
        <end position="184"/>
    </location>
</feature>
<feature type="domain" description="Asparagine synthetase">
    <location>
        <begin position="308"/>
        <end position="597"/>
    </location>
</feature>
<feature type="region of interest" description="Disordered" evidence="3">
    <location>
        <begin position="373"/>
        <end position="404"/>
    </location>
</feature>
<feature type="active site" description="For GATase activity" evidence="1">
    <location>
        <position position="2"/>
    </location>
</feature>
<feature type="splice variant" id="VSP_032353" description="In isoform 2." evidence="4">
    <original>PFLDENVVSFLNSLPVWEKVDLTLPRGVGEKLILRLAAMELGLPASALLPKRAIQFGSRIAKLEKSNEKASDKCGRLQILP</original>
    <variation>AQHVPVPFATSLTMHMLSDFC</variation>
    <location>
        <begin position="547"/>
        <end position="627"/>
    </location>
</feature>
<feature type="sequence conflict" description="In Ref. 1; BAE40074." evidence="5" ref="1">
    <original>L</original>
    <variation>I</variation>
    <location>
        <position position="39"/>
    </location>
</feature>
<feature type="sequence conflict" description="In Ref. 1; BAE40074." evidence="5" ref="1">
    <original>G</original>
    <variation>D</variation>
    <location>
        <position position="117"/>
    </location>
</feature>
<feature type="sequence conflict" description="In Ref. 1; BAE40074." evidence="5" ref="1">
    <original>P</original>
    <variation>Q</variation>
    <location>
        <position position="223"/>
    </location>
</feature>
<feature type="sequence conflict" description="In Ref. 2; AAH13617." evidence="5" ref="2">
    <original>S</original>
    <variation>F</variation>
    <location>
        <position position="612"/>
    </location>
</feature>
<name>ASND1_MOUSE</name>
<organism>
    <name type="scientific">Mus musculus</name>
    <name type="common">Mouse</name>
    <dbReference type="NCBI Taxonomy" id="10090"/>
    <lineage>
        <taxon>Eukaryota</taxon>
        <taxon>Metazoa</taxon>
        <taxon>Chordata</taxon>
        <taxon>Craniata</taxon>
        <taxon>Vertebrata</taxon>
        <taxon>Euteleostomi</taxon>
        <taxon>Mammalia</taxon>
        <taxon>Eutheria</taxon>
        <taxon>Euarchontoglires</taxon>
        <taxon>Glires</taxon>
        <taxon>Rodentia</taxon>
        <taxon>Myomorpha</taxon>
        <taxon>Muroidea</taxon>
        <taxon>Muridae</taxon>
        <taxon>Murinae</taxon>
        <taxon>Mus</taxon>
        <taxon>Mus</taxon>
    </lineage>
</organism>
<protein>
    <recommendedName>
        <fullName>Asparagine synthetase domain-containing protein 1</fullName>
    </recommendedName>
</protein>
<proteinExistence type="evidence at transcript level"/>
<accession>Q8BFS9</accession>
<accession>Q3THX2</accession>
<accession>Q3U2Y8</accession>
<accession>Q3U317</accession>
<accession>Q8BM66</accession>
<accession>Q91YY3</accession>
<reference key="1">
    <citation type="journal article" date="2005" name="Science">
        <title>The transcriptional landscape of the mammalian genome.</title>
        <authorList>
            <person name="Carninci P."/>
            <person name="Kasukawa T."/>
            <person name="Katayama S."/>
            <person name="Gough J."/>
            <person name="Frith M.C."/>
            <person name="Maeda N."/>
            <person name="Oyama R."/>
            <person name="Ravasi T."/>
            <person name="Lenhard B."/>
            <person name="Wells C."/>
            <person name="Kodzius R."/>
            <person name="Shimokawa K."/>
            <person name="Bajic V.B."/>
            <person name="Brenner S.E."/>
            <person name="Batalov S."/>
            <person name="Forrest A.R."/>
            <person name="Zavolan M."/>
            <person name="Davis M.J."/>
            <person name="Wilming L.G."/>
            <person name="Aidinis V."/>
            <person name="Allen J.E."/>
            <person name="Ambesi-Impiombato A."/>
            <person name="Apweiler R."/>
            <person name="Aturaliya R.N."/>
            <person name="Bailey T.L."/>
            <person name="Bansal M."/>
            <person name="Baxter L."/>
            <person name="Beisel K.W."/>
            <person name="Bersano T."/>
            <person name="Bono H."/>
            <person name="Chalk A.M."/>
            <person name="Chiu K.P."/>
            <person name="Choudhary V."/>
            <person name="Christoffels A."/>
            <person name="Clutterbuck D.R."/>
            <person name="Crowe M.L."/>
            <person name="Dalla E."/>
            <person name="Dalrymple B.P."/>
            <person name="de Bono B."/>
            <person name="Della Gatta G."/>
            <person name="di Bernardo D."/>
            <person name="Down T."/>
            <person name="Engstrom P."/>
            <person name="Fagiolini M."/>
            <person name="Faulkner G."/>
            <person name="Fletcher C.F."/>
            <person name="Fukushima T."/>
            <person name="Furuno M."/>
            <person name="Futaki S."/>
            <person name="Gariboldi M."/>
            <person name="Georgii-Hemming P."/>
            <person name="Gingeras T.R."/>
            <person name="Gojobori T."/>
            <person name="Green R.E."/>
            <person name="Gustincich S."/>
            <person name="Harbers M."/>
            <person name="Hayashi Y."/>
            <person name="Hensch T.K."/>
            <person name="Hirokawa N."/>
            <person name="Hill D."/>
            <person name="Huminiecki L."/>
            <person name="Iacono M."/>
            <person name="Ikeo K."/>
            <person name="Iwama A."/>
            <person name="Ishikawa T."/>
            <person name="Jakt M."/>
            <person name="Kanapin A."/>
            <person name="Katoh M."/>
            <person name="Kawasawa Y."/>
            <person name="Kelso J."/>
            <person name="Kitamura H."/>
            <person name="Kitano H."/>
            <person name="Kollias G."/>
            <person name="Krishnan S.P."/>
            <person name="Kruger A."/>
            <person name="Kummerfeld S.K."/>
            <person name="Kurochkin I.V."/>
            <person name="Lareau L.F."/>
            <person name="Lazarevic D."/>
            <person name="Lipovich L."/>
            <person name="Liu J."/>
            <person name="Liuni S."/>
            <person name="McWilliam S."/>
            <person name="Madan Babu M."/>
            <person name="Madera M."/>
            <person name="Marchionni L."/>
            <person name="Matsuda H."/>
            <person name="Matsuzawa S."/>
            <person name="Miki H."/>
            <person name="Mignone F."/>
            <person name="Miyake S."/>
            <person name="Morris K."/>
            <person name="Mottagui-Tabar S."/>
            <person name="Mulder N."/>
            <person name="Nakano N."/>
            <person name="Nakauchi H."/>
            <person name="Ng P."/>
            <person name="Nilsson R."/>
            <person name="Nishiguchi S."/>
            <person name="Nishikawa S."/>
            <person name="Nori F."/>
            <person name="Ohara O."/>
            <person name="Okazaki Y."/>
            <person name="Orlando V."/>
            <person name="Pang K.C."/>
            <person name="Pavan W.J."/>
            <person name="Pavesi G."/>
            <person name="Pesole G."/>
            <person name="Petrovsky N."/>
            <person name="Piazza S."/>
            <person name="Reed J."/>
            <person name="Reid J.F."/>
            <person name="Ring B.Z."/>
            <person name="Ringwald M."/>
            <person name="Rost B."/>
            <person name="Ruan Y."/>
            <person name="Salzberg S.L."/>
            <person name="Sandelin A."/>
            <person name="Schneider C."/>
            <person name="Schoenbach C."/>
            <person name="Sekiguchi K."/>
            <person name="Semple C.A."/>
            <person name="Seno S."/>
            <person name="Sessa L."/>
            <person name="Sheng Y."/>
            <person name="Shibata Y."/>
            <person name="Shimada H."/>
            <person name="Shimada K."/>
            <person name="Silva D."/>
            <person name="Sinclair B."/>
            <person name="Sperling S."/>
            <person name="Stupka E."/>
            <person name="Sugiura K."/>
            <person name="Sultana R."/>
            <person name="Takenaka Y."/>
            <person name="Taki K."/>
            <person name="Tammoja K."/>
            <person name="Tan S.L."/>
            <person name="Tang S."/>
            <person name="Taylor M.S."/>
            <person name="Tegner J."/>
            <person name="Teichmann S.A."/>
            <person name="Ueda H.R."/>
            <person name="van Nimwegen E."/>
            <person name="Verardo R."/>
            <person name="Wei C.L."/>
            <person name="Yagi K."/>
            <person name="Yamanishi H."/>
            <person name="Zabarovsky E."/>
            <person name="Zhu S."/>
            <person name="Zimmer A."/>
            <person name="Hide W."/>
            <person name="Bult C."/>
            <person name="Grimmond S.M."/>
            <person name="Teasdale R.D."/>
            <person name="Liu E.T."/>
            <person name="Brusic V."/>
            <person name="Quackenbush J."/>
            <person name="Wahlestedt C."/>
            <person name="Mattick J.S."/>
            <person name="Hume D.A."/>
            <person name="Kai C."/>
            <person name="Sasaki D."/>
            <person name="Tomaru Y."/>
            <person name="Fukuda S."/>
            <person name="Kanamori-Katayama M."/>
            <person name="Suzuki M."/>
            <person name="Aoki J."/>
            <person name="Arakawa T."/>
            <person name="Iida J."/>
            <person name="Imamura K."/>
            <person name="Itoh M."/>
            <person name="Kato T."/>
            <person name="Kawaji H."/>
            <person name="Kawagashira N."/>
            <person name="Kawashima T."/>
            <person name="Kojima M."/>
            <person name="Kondo S."/>
            <person name="Konno H."/>
            <person name="Nakano K."/>
            <person name="Ninomiya N."/>
            <person name="Nishio T."/>
            <person name="Okada M."/>
            <person name="Plessy C."/>
            <person name="Shibata K."/>
            <person name="Shiraki T."/>
            <person name="Suzuki S."/>
            <person name="Tagami M."/>
            <person name="Waki K."/>
            <person name="Watahiki A."/>
            <person name="Okamura-Oho Y."/>
            <person name="Suzuki H."/>
            <person name="Kawai J."/>
            <person name="Hayashizaki Y."/>
        </authorList>
    </citation>
    <scope>NUCLEOTIDE SEQUENCE [LARGE SCALE MRNA] (ISOFORMS 1 AND 2)</scope>
    <source>
        <strain>BALB/cJ</strain>
        <strain>C57BL/6J</strain>
        <strain>NOD</strain>
        <tissue>Embryo</tissue>
        <tissue>Testis</tissue>
    </source>
</reference>
<reference key="2">
    <citation type="journal article" date="2004" name="Genome Res.">
        <title>The status, quality, and expansion of the NIH full-length cDNA project: the Mammalian Gene Collection (MGC).</title>
        <authorList>
            <consortium name="The MGC Project Team"/>
        </authorList>
    </citation>
    <scope>NUCLEOTIDE SEQUENCE [LARGE SCALE MRNA] (ISOFORM 1)</scope>
    <source>
        <strain>FVB/N</strain>
        <tissue>Mammary tumor</tissue>
    </source>
</reference>